<sequence length="123" mass="13987">MPTVNQLIRKPRQANVKRNKVPALQENPQKRGVCTRVYTTTPKKPNSALRKVAKIRLTNGFEVIGYIPGEGHNLQEHSVVMIRGGRVKDLPGVRYHIIRGVLDTQGVKNRKQRRSKYGAKRPK</sequence>
<gene>
    <name evidence="2" type="primary">rpsL</name>
    <name type="ordered locus">Rleg2_1327</name>
</gene>
<proteinExistence type="inferred from homology"/>
<reference key="1">
    <citation type="journal article" date="2010" name="Stand. Genomic Sci.">
        <title>Complete genome sequence of Rhizobium leguminosarum bv trifolii strain WSM2304, an effective microsymbiont of the South American clover Trifolium polymorphum.</title>
        <authorList>
            <person name="Reeve W."/>
            <person name="O'Hara G."/>
            <person name="Chain P."/>
            <person name="Ardley J."/>
            <person name="Brau L."/>
            <person name="Nandesena K."/>
            <person name="Tiwari R."/>
            <person name="Malfatti S."/>
            <person name="Kiss H."/>
            <person name="Lapidus A."/>
            <person name="Copeland A."/>
            <person name="Nolan M."/>
            <person name="Land M."/>
            <person name="Ivanova N."/>
            <person name="Mavromatis K."/>
            <person name="Markowitz V."/>
            <person name="Kyrpides N."/>
            <person name="Melino V."/>
            <person name="Denton M."/>
            <person name="Yates R."/>
            <person name="Howieson J."/>
        </authorList>
    </citation>
    <scope>NUCLEOTIDE SEQUENCE [LARGE SCALE GENOMIC DNA]</scope>
    <source>
        <strain>WSM2304</strain>
    </source>
</reference>
<comment type="function">
    <text evidence="2">With S4 and S5 plays an important role in translational accuracy.</text>
</comment>
<comment type="function">
    <text evidence="2">Interacts with and stabilizes bases of the 16S rRNA that are involved in tRNA selection in the A site and with the mRNA backbone. Located at the interface of the 30S and 50S subunits, it traverses the body of the 30S subunit contacting proteins on the other side and probably holding the rRNA structure together. The combined cluster of proteins S8, S12 and S17 appears to hold together the shoulder and platform of the 30S subunit.</text>
</comment>
<comment type="subunit">
    <text evidence="2">Part of the 30S ribosomal subunit. Contacts proteins S8 and S17. May interact with IF1 in the 30S initiation complex.</text>
</comment>
<comment type="similarity">
    <text evidence="2">Belongs to the universal ribosomal protein uS12 family.</text>
</comment>
<organism>
    <name type="scientific">Rhizobium leguminosarum bv. trifolii (strain WSM2304)</name>
    <dbReference type="NCBI Taxonomy" id="395492"/>
    <lineage>
        <taxon>Bacteria</taxon>
        <taxon>Pseudomonadati</taxon>
        <taxon>Pseudomonadota</taxon>
        <taxon>Alphaproteobacteria</taxon>
        <taxon>Hyphomicrobiales</taxon>
        <taxon>Rhizobiaceae</taxon>
        <taxon>Rhizobium/Agrobacterium group</taxon>
        <taxon>Rhizobium</taxon>
    </lineage>
</organism>
<feature type="chain" id="PRO_1000194215" description="Small ribosomal subunit protein uS12">
    <location>
        <begin position="1"/>
        <end position="123"/>
    </location>
</feature>
<feature type="modified residue" description="3-methylthioaspartic acid" evidence="1">
    <location>
        <position position="89"/>
    </location>
</feature>
<name>RS12_RHILW</name>
<evidence type="ECO:0000250" key="1"/>
<evidence type="ECO:0000255" key="2">
    <source>
        <dbReference type="HAMAP-Rule" id="MF_00403"/>
    </source>
</evidence>
<evidence type="ECO:0000305" key="3"/>
<protein>
    <recommendedName>
        <fullName evidence="2">Small ribosomal subunit protein uS12</fullName>
    </recommendedName>
    <alternativeName>
        <fullName evidence="3">30S ribosomal protein S12</fullName>
    </alternativeName>
</protein>
<accession>B5ZYT0</accession>
<dbReference type="EMBL" id="CP001191">
    <property type="protein sequence ID" value="ACI54621.1"/>
    <property type="molecule type" value="Genomic_DNA"/>
</dbReference>
<dbReference type="RefSeq" id="WP_003547537.1">
    <property type="nucleotide sequence ID" value="NC_011369.1"/>
</dbReference>
<dbReference type="SMR" id="B5ZYT0"/>
<dbReference type="STRING" id="395492.Rleg2_1327"/>
<dbReference type="GeneID" id="91148123"/>
<dbReference type="KEGG" id="rlt:Rleg2_1327"/>
<dbReference type="eggNOG" id="COG0048">
    <property type="taxonomic scope" value="Bacteria"/>
</dbReference>
<dbReference type="HOGENOM" id="CLU_104295_1_2_5"/>
<dbReference type="Proteomes" id="UP000008330">
    <property type="component" value="Chromosome"/>
</dbReference>
<dbReference type="GO" id="GO:0015935">
    <property type="term" value="C:small ribosomal subunit"/>
    <property type="evidence" value="ECO:0007669"/>
    <property type="project" value="InterPro"/>
</dbReference>
<dbReference type="GO" id="GO:0019843">
    <property type="term" value="F:rRNA binding"/>
    <property type="evidence" value="ECO:0007669"/>
    <property type="project" value="UniProtKB-UniRule"/>
</dbReference>
<dbReference type="GO" id="GO:0003735">
    <property type="term" value="F:structural constituent of ribosome"/>
    <property type="evidence" value="ECO:0007669"/>
    <property type="project" value="InterPro"/>
</dbReference>
<dbReference type="GO" id="GO:0000049">
    <property type="term" value="F:tRNA binding"/>
    <property type="evidence" value="ECO:0007669"/>
    <property type="project" value="UniProtKB-UniRule"/>
</dbReference>
<dbReference type="GO" id="GO:0006412">
    <property type="term" value="P:translation"/>
    <property type="evidence" value="ECO:0007669"/>
    <property type="project" value="UniProtKB-UniRule"/>
</dbReference>
<dbReference type="CDD" id="cd03368">
    <property type="entry name" value="Ribosomal_S12"/>
    <property type="match status" value="1"/>
</dbReference>
<dbReference type="FunFam" id="2.40.50.140:FF:000001">
    <property type="entry name" value="30S ribosomal protein S12"/>
    <property type="match status" value="1"/>
</dbReference>
<dbReference type="Gene3D" id="2.40.50.140">
    <property type="entry name" value="Nucleic acid-binding proteins"/>
    <property type="match status" value="1"/>
</dbReference>
<dbReference type="HAMAP" id="MF_00403_B">
    <property type="entry name" value="Ribosomal_uS12_B"/>
    <property type="match status" value="1"/>
</dbReference>
<dbReference type="InterPro" id="IPR012340">
    <property type="entry name" value="NA-bd_OB-fold"/>
</dbReference>
<dbReference type="InterPro" id="IPR006032">
    <property type="entry name" value="Ribosomal_uS12"/>
</dbReference>
<dbReference type="InterPro" id="IPR005679">
    <property type="entry name" value="Ribosomal_uS12_bac"/>
</dbReference>
<dbReference type="NCBIfam" id="TIGR00981">
    <property type="entry name" value="rpsL_bact"/>
    <property type="match status" value="1"/>
</dbReference>
<dbReference type="PANTHER" id="PTHR11652">
    <property type="entry name" value="30S RIBOSOMAL PROTEIN S12 FAMILY MEMBER"/>
    <property type="match status" value="1"/>
</dbReference>
<dbReference type="Pfam" id="PF00164">
    <property type="entry name" value="Ribosom_S12_S23"/>
    <property type="match status" value="1"/>
</dbReference>
<dbReference type="PIRSF" id="PIRSF002133">
    <property type="entry name" value="Ribosomal_S12/S23"/>
    <property type="match status" value="1"/>
</dbReference>
<dbReference type="PRINTS" id="PR01034">
    <property type="entry name" value="RIBOSOMALS12"/>
</dbReference>
<dbReference type="SUPFAM" id="SSF50249">
    <property type="entry name" value="Nucleic acid-binding proteins"/>
    <property type="match status" value="1"/>
</dbReference>
<dbReference type="PROSITE" id="PS00055">
    <property type="entry name" value="RIBOSOMAL_S12"/>
    <property type="match status" value="1"/>
</dbReference>
<keyword id="KW-0488">Methylation</keyword>
<keyword id="KW-1185">Reference proteome</keyword>
<keyword id="KW-0687">Ribonucleoprotein</keyword>
<keyword id="KW-0689">Ribosomal protein</keyword>
<keyword id="KW-0694">RNA-binding</keyword>
<keyword id="KW-0699">rRNA-binding</keyword>
<keyword id="KW-0820">tRNA-binding</keyword>